<name>TPPJ_ARATH</name>
<organism>
    <name type="scientific">Arabidopsis thaliana</name>
    <name type="common">Mouse-ear cress</name>
    <dbReference type="NCBI Taxonomy" id="3702"/>
    <lineage>
        <taxon>Eukaryota</taxon>
        <taxon>Viridiplantae</taxon>
        <taxon>Streptophyta</taxon>
        <taxon>Embryophyta</taxon>
        <taxon>Tracheophyta</taxon>
        <taxon>Spermatophyta</taxon>
        <taxon>Magnoliopsida</taxon>
        <taxon>eudicotyledons</taxon>
        <taxon>Gunneridae</taxon>
        <taxon>Pentapetalae</taxon>
        <taxon>rosids</taxon>
        <taxon>malvids</taxon>
        <taxon>Brassicales</taxon>
        <taxon>Brassicaceae</taxon>
        <taxon>Camelineae</taxon>
        <taxon>Arabidopsis</taxon>
    </lineage>
</organism>
<accession>Q5HZ05</accession>
<accession>Q9FJQ1</accession>
<sequence length="370" mass="41758">MVSQNVVVSDAKTGIITVSTVSNSSVFTPTAQKPPTAPGYISVSKKKLLKNLEINGADQSQRLNSWVDSMRASSPTHLKSLSSFSSEEEHNSWIKRHPSALNMFERIIEEARGKQIVMFLDYDGTLSPIVDDPDRAFMTSKMRRTVKKMAKCFPTSIVTGRCIDKVYSFVKLAELYYAGSHGMDIKGPTKGFSRYNKDKPSVLYQPAGDFLPMIDEVYKQLVEKTKSTPGAKVENNKFCLSVHFRCVDEKKWSELASKVRSVVKNYPTLKLSQGRKVFEIRPIIKWNKGKALEFLLESLGFENCNDVFPIYIGDDKTDEDAFKLLRGRGQGFGILVSKFPKDTSASYSLQDPPEVMNFLGRLVEWKQMQQ</sequence>
<reference key="1">
    <citation type="journal article" date="1998" name="DNA Res.">
        <title>Structural analysis of Arabidopsis thaliana chromosome 5. VI. Sequence features of the regions of 1,367,185 bp covered by 19 physically assigned P1 and TAC clones.</title>
        <authorList>
            <person name="Kotani H."/>
            <person name="Nakamura Y."/>
            <person name="Sato S."/>
            <person name="Asamizu E."/>
            <person name="Kaneko T."/>
            <person name="Miyajima N."/>
            <person name="Tabata S."/>
        </authorList>
    </citation>
    <scope>NUCLEOTIDE SEQUENCE [LARGE SCALE GENOMIC DNA]</scope>
    <source>
        <strain>cv. Columbia</strain>
    </source>
</reference>
<reference key="2">
    <citation type="journal article" date="2017" name="Plant J.">
        <title>Araport11: a complete reannotation of the Arabidopsis thaliana reference genome.</title>
        <authorList>
            <person name="Cheng C.Y."/>
            <person name="Krishnakumar V."/>
            <person name="Chan A.P."/>
            <person name="Thibaud-Nissen F."/>
            <person name="Schobel S."/>
            <person name="Town C.D."/>
        </authorList>
    </citation>
    <scope>GENOME REANNOTATION</scope>
    <source>
        <strain>cv. Columbia</strain>
    </source>
</reference>
<reference key="3">
    <citation type="submission" date="2005-01" db="EMBL/GenBank/DDBJ databases">
        <title>Arabidopsis ORF clones.</title>
        <authorList>
            <person name="Kim C.J."/>
            <person name="Chen H."/>
            <person name="Cheuk R.F."/>
            <person name="Shinn P."/>
            <person name="Ecker J.R."/>
        </authorList>
    </citation>
    <scope>NUCLEOTIDE SEQUENCE [LARGE SCALE MRNA]</scope>
    <source>
        <strain>cv. Columbia</strain>
    </source>
</reference>
<reference key="4">
    <citation type="submission" date="2005-03" db="EMBL/GenBank/DDBJ databases">
        <title>Large-scale analysis of RIKEN Arabidopsis full-length (RAFL) cDNAs.</title>
        <authorList>
            <person name="Totoki Y."/>
            <person name="Seki M."/>
            <person name="Ishida J."/>
            <person name="Nakajima M."/>
            <person name="Enju A."/>
            <person name="Kamiya A."/>
            <person name="Narusaka M."/>
            <person name="Shin-i T."/>
            <person name="Nakagawa M."/>
            <person name="Sakamoto N."/>
            <person name="Oishi K."/>
            <person name="Kohara Y."/>
            <person name="Kobayashi M."/>
            <person name="Toyoda A."/>
            <person name="Sakaki Y."/>
            <person name="Sakurai T."/>
            <person name="Iida K."/>
            <person name="Akiyama K."/>
            <person name="Satou M."/>
            <person name="Toyoda T."/>
            <person name="Konagaya A."/>
            <person name="Carninci P."/>
            <person name="Kawai J."/>
            <person name="Hayashizaki Y."/>
            <person name="Shinozaki K."/>
        </authorList>
    </citation>
    <scope>NUCLEOTIDE SEQUENCE [LARGE SCALE MRNA]</scope>
    <source>
        <strain>cv. Columbia</strain>
    </source>
</reference>
<reference key="5">
    <citation type="journal article" date="2001" name="J. Exp. Bot.">
        <title>Trehalose metabolism in Arabidopsis: occurrence of trehalose and molecular cloning and characterization of trehalose-6-phosphate synthase homologues.</title>
        <authorList>
            <person name="Vogel G."/>
            <person name="Fiehn O."/>
            <person name="Jean-Richard-dit-Bressel L."/>
            <person name="Boller T."/>
            <person name="Wiemken A."/>
            <person name="Aeschbacher R.A."/>
            <person name="Wingler A."/>
        </authorList>
    </citation>
    <scope>INDUCTION BY CADMIUM</scope>
</reference>
<reference key="6">
    <citation type="journal article" date="2003" name="J. Exp. Bot.">
        <title>Is trehalose-6-phosphate a regulator of sugar metabolism in plants?</title>
        <authorList>
            <person name="Eastmond P.J."/>
            <person name="Li Y."/>
            <person name="Graham I.A."/>
        </authorList>
    </citation>
    <scope>GENE FAMILY</scope>
</reference>
<reference key="7">
    <citation type="journal article" date="2004" name="Plant Physiol.">
        <title>Trehalose mediated growth inhibition of Arabidopsis seedlings is due to trehalose-6-phosphate accumulation.</title>
        <authorList>
            <person name="Schluepmann H."/>
            <person name="van Dijken A.J.H."/>
            <person name="Aghdasi M."/>
            <person name="Wobbes B."/>
            <person name="Paul M."/>
            <person name="Smeekens S.C.M."/>
        </authorList>
    </citation>
    <scope>NOMENCLATURE</scope>
</reference>
<evidence type="ECO:0000250" key="1"/>
<evidence type="ECO:0000269" key="2">
    <source>
    </source>
</evidence>
<evidence type="ECO:0000305" key="3"/>
<keyword id="KW-0025">Alternative splicing</keyword>
<keyword id="KW-0378">Hydrolase</keyword>
<keyword id="KW-1185">Reference proteome</keyword>
<keyword id="KW-0346">Stress response</keyword>
<dbReference type="EC" id="3.1.3.12"/>
<dbReference type="EMBL" id="AB013395">
    <property type="protein sequence ID" value="BAB11650.1"/>
    <property type="status" value="ALT_SEQ"/>
    <property type="molecule type" value="Genomic_DNA"/>
</dbReference>
<dbReference type="EMBL" id="CP002688">
    <property type="protein sequence ID" value="AED98007.1"/>
    <property type="molecule type" value="Genomic_DNA"/>
</dbReference>
<dbReference type="EMBL" id="BT020466">
    <property type="protein sequence ID" value="AAW38967.1"/>
    <property type="molecule type" value="mRNA"/>
</dbReference>
<dbReference type="EMBL" id="BT020519">
    <property type="protein sequence ID" value="AAW39020.1"/>
    <property type="molecule type" value="mRNA"/>
</dbReference>
<dbReference type="EMBL" id="AK221501">
    <property type="protein sequence ID" value="BAD94722.1"/>
    <property type="molecule type" value="mRNA"/>
</dbReference>
<dbReference type="RefSeq" id="NP_201319.2">
    <molecule id="Q5HZ05-1"/>
    <property type="nucleotide sequence ID" value="NM_125913.5"/>
</dbReference>
<dbReference type="SMR" id="Q5HZ05"/>
<dbReference type="FunCoup" id="Q5HZ05">
    <property type="interactions" value="172"/>
</dbReference>
<dbReference type="STRING" id="3702.Q5HZ05"/>
<dbReference type="iPTMnet" id="Q5HZ05"/>
<dbReference type="PaxDb" id="3702-AT5G65140.1"/>
<dbReference type="ProteomicsDB" id="228322">
    <molecule id="Q5HZ05-1"/>
</dbReference>
<dbReference type="EnsemblPlants" id="AT5G65140.1">
    <molecule id="Q5HZ05-1"/>
    <property type="protein sequence ID" value="AT5G65140.1"/>
    <property type="gene ID" value="AT5G65140"/>
</dbReference>
<dbReference type="GeneID" id="836638"/>
<dbReference type="Gramene" id="AT5G65140.1">
    <molecule id="Q5HZ05-1"/>
    <property type="protein sequence ID" value="AT5G65140.1"/>
    <property type="gene ID" value="AT5G65140"/>
</dbReference>
<dbReference type="KEGG" id="ath:AT5G65140"/>
<dbReference type="Araport" id="AT5G65140"/>
<dbReference type="TAIR" id="AT5G65140">
    <property type="gene designation" value="TPPJ"/>
</dbReference>
<dbReference type="eggNOG" id="KOG1050">
    <property type="taxonomic scope" value="Eukaryota"/>
</dbReference>
<dbReference type="HOGENOM" id="CLU_037265_1_2_1"/>
<dbReference type="InParanoid" id="Q5HZ05"/>
<dbReference type="OMA" id="NGRINSW"/>
<dbReference type="PhylomeDB" id="Q5HZ05"/>
<dbReference type="UniPathway" id="UPA00299"/>
<dbReference type="PRO" id="PR:Q5HZ05"/>
<dbReference type="Proteomes" id="UP000006548">
    <property type="component" value="Chromosome 5"/>
</dbReference>
<dbReference type="ExpressionAtlas" id="Q5HZ05">
    <property type="expression patterns" value="baseline and differential"/>
</dbReference>
<dbReference type="GO" id="GO:0005730">
    <property type="term" value="C:nucleolus"/>
    <property type="evidence" value="ECO:0000314"/>
    <property type="project" value="TAIR"/>
</dbReference>
<dbReference type="GO" id="GO:0005634">
    <property type="term" value="C:nucleus"/>
    <property type="evidence" value="ECO:0000314"/>
    <property type="project" value="TAIR"/>
</dbReference>
<dbReference type="GO" id="GO:0004805">
    <property type="term" value="F:trehalose-phosphatase activity"/>
    <property type="evidence" value="ECO:0007669"/>
    <property type="project" value="UniProtKB-EC"/>
</dbReference>
<dbReference type="GO" id="GO:0046686">
    <property type="term" value="P:response to cadmium ion"/>
    <property type="evidence" value="ECO:0000270"/>
    <property type="project" value="TAIR"/>
</dbReference>
<dbReference type="GO" id="GO:0005992">
    <property type="term" value="P:trehalose biosynthetic process"/>
    <property type="evidence" value="ECO:0007669"/>
    <property type="project" value="UniProtKB-UniPathway"/>
</dbReference>
<dbReference type="CDD" id="cd01627">
    <property type="entry name" value="HAD_TPP"/>
    <property type="match status" value="1"/>
</dbReference>
<dbReference type="FunFam" id="3.40.50.1000:FF:000073">
    <property type="entry name" value="Trehalose 6-phosphate phosphatase"/>
    <property type="match status" value="1"/>
</dbReference>
<dbReference type="FunFam" id="3.40.50.1000:FF:000099">
    <property type="entry name" value="Trehalose 6-phosphate phosphatase"/>
    <property type="match status" value="1"/>
</dbReference>
<dbReference type="Gene3D" id="3.40.50.1000">
    <property type="entry name" value="HAD superfamily/HAD-like"/>
    <property type="match status" value="2"/>
</dbReference>
<dbReference type="InterPro" id="IPR036412">
    <property type="entry name" value="HAD-like_sf"/>
</dbReference>
<dbReference type="InterPro" id="IPR006379">
    <property type="entry name" value="HAD-SF_hydro_IIB"/>
</dbReference>
<dbReference type="InterPro" id="IPR023214">
    <property type="entry name" value="HAD_sf"/>
</dbReference>
<dbReference type="InterPro" id="IPR044651">
    <property type="entry name" value="OTSB-like"/>
</dbReference>
<dbReference type="InterPro" id="IPR003337">
    <property type="entry name" value="Trehalose_PPase"/>
</dbReference>
<dbReference type="NCBIfam" id="TIGR01484">
    <property type="entry name" value="HAD-SF-IIB"/>
    <property type="match status" value="1"/>
</dbReference>
<dbReference type="NCBIfam" id="TIGR00685">
    <property type="entry name" value="T6PP"/>
    <property type="match status" value="1"/>
</dbReference>
<dbReference type="PANTHER" id="PTHR43768">
    <property type="entry name" value="TREHALOSE 6-PHOSPHATE PHOSPHATASE"/>
    <property type="match status" value="1"/>
</dbReference>
<dbReference type="PANTHER" id="PTHR43768:SF44">
    <property type="entry name" value="TREHALOSE-PHOSPHATE PHOSPHATASE J-RELATED"/>
    <property type="match status" value="1"/>
</dbReference>
<dbReference type="Pfam" id="PF02358">
    <property type="entry name" value="Trehalose_PPase"/>
    <property type="match status" value="1"/>
</dbReference>
<dbReference type="SUPFAM" id="SSF56784">
    <property type="entry name" value="HAD-like"/>
    <property type="match status" value="1"/>
</dbReference>
<protein>
    <recommendedName>
        <fullName>Probable trehalose-phosphate phosphatase J</fullName>
        <shortName>AtTPPJ</shortName>
        <ecNumber>3.1.3.12</ecNumber>
    </recommendedName>
    <alternativeName>
        <fullName>Trehalose 6-phosphate phosphatase</fullName>
    </alternativeName>
</protein>
<feature type="chain" id="PRO_0000417652" description="Probable trehalose-phosphate phosphatase J">
    <location>
        <begin position="1"/>
        <end position="370"/>
    </location>
</feature>
<proteinExistence type="evidence at protein level"/>
<comment type="function">
    <text evidence="1">Removes the phosphate from trehalose 6-phosphate to produce free trehalose. Trehalose accumulation in plant may improve abiotic stress tolerance (By similarity).</text>
</comment>
<comment type="catalytic activity">
    <reaction>
        <text>alpha,alpha-trehalose 6-phosphate + H2O = alpha,alpha-trehalose + phosphate</text>
        <dbReference type="Rhea" id="RHEA:23420"/>
        <dbReference type="ChEBI" id="CHEBI:15377"/>
        <dbReference type="ChEBI" id="CHEBI:16551"/>
        <dbReference type="ChEBI" id="CHEBI:43474"/>
        <dbReference type="ChEBI" id="CHEBI:58429"/>
        <dbReference type="EC" id="3.1.3.12"/>
    </reaction>
</comment>
<comment type="cofactor">
    <cofactor evidence="1">
        <name>a divalent metal cation</name>
        <dbReference type="ChEBI" id="CHEBI:60240"/>
    </cofactor>
</comment>
<comment type="pathway">
    <text>Glycan biosynthesis; trehalose biosynthesis.</text>
</comment>
<comment type="alternative products">
    <event type="alternative splicing"/>
    <isoform>
        <id>Q5HZ05-1</id>
        <name>1</name>
        <sequence type="displayed"/>
    </isoform>
    <text>A number of isoforms are produced. According to EST sequences.</text>
</comment>
<comment type="induction">
    <text evidence="2">By cadmium in roots (at protein level).</text>
</comment>
<comment type="similarity">
    <text evidence="3">Belongs to the trehalose phosphatase family.</text>
</comment>
<comment type="sequence caution" evidence="3">
    <conflict type="erroneous gene model prediction">
        <sequence resource="EMBL-CDS" id="BAB11650"/>
    </conflict>
</comment>
<gene>
    <name type="primary">TPPJ</name>
    <name type="ordered locus">At5g65140</name>
    <name type="ORF">MQN23.7</name>
</gene>